<keyword id="KW-0460">Magnesium</keyword>
<keyword id="KW-0479">Metal-binding</keyword>
<keyword id="KW-0808">Transferase</keyword>
<protein>
    <recommendedName>
        <fullName evidence="1">Isoprenyl transferase</fullName>
        <ecNumber evidence="1">2.5.1.-</ecNumber>
    </recommendedName>
</protein>
<evidence type="ECO:0000255" key="1">
    <source>
        <dbReference type="HAMAP-Rule" id="MF_01139"/>
    </source>
</evidence>
<gene>
    <name evidence="1" type="primary">uppS</name>
    <name type="ordered locus">lin1352</name>
</gene>
<proteinExistence type="inferred from homology"/>
<organism>
    <name type="scientific">Listeria innocua serovar 6a (strain ATCC BAA-680 / CLIP 11262)</name>
    <dbReference type="NCBI Taxonomy" id="272626"/>
    <lineage>
        <taxon>Bacteria</taxon>
        <taxon>Bacillati</taxon>
        <taxon>Bacillota</taxon>
        <taxon>Bacilli</taxon>
        <taxon>Bacillales</taxon>
        <taxon>Listeriaceae</taxon>
        <taxon>Listeria</taxon>
    </lineage>
</organism>
<name>ISPT_LISIN</name>
<sequence length="252" mass="28996">MFKKLFRQDGNILNSELAEDLPIPRHVAIIMDGNGRWAKKRFLPRIAGHKEGMDVVKRVTRYANAIGIDVLTLYAFSTENWKRPTDEVDFLMKLPVEFFDSFVPELIEENVRVNVMGYRENLPEHTMRAVEKAIADTAHCTGLTLNFALNYGGRSEIITAAKEAMKELVSEGKTSEDLTEELLNDHLMSHGLGDPDLLIRTSGELRLSNFMLWQLAYSEFYFTETHWPDFSKEDFLQAIIEYQNRSRRFGGL</sequence>
<dbReference type="EC" id="2.5.1.-" evidence="1"/>
<dbReference type="EMBL" id="AL596168">
    <property type="protein sequence ID" value="CAC96583.1"/>
    <property type="molecule type" value="Genomic_DNA"/>
</dbReference>
<dbReference type="PIR" id="AG1601">
    <property type="entry name" value="AG1601"/>
</dbReference>
<dbReference type="RefSeq" id="WP_010991493.1">
    <property type="nucleotide sequence ID" value="NC_003212.1"/>
</dbReference>
<dbReference type="SMR" id="Q92C39"/>
<dbReference type="STRING" id="272626.gene:17565683"/>
<dbReference type="GeneID" id="93234732"/>
<dbReference type="KEGG" id="lin:lin1352"/>
<dbReference type="eggNOG" id="COG0020">
    <property type="taxonomic scope" value="Bacteria"/>
</dbReference>
<dbReference type="HOGENOM" id="CLU_038505_1_1_9"/>
<dbReference type="OrthoDB" id="4191603at2"/>
<dbReference type="Proteomes" id="UP000002513">
    <property type="component" value="Chromosome"/>
</dbReference>
<dbReference type="GO" id="GO:0005829">
    <property type="term" value="C:cytosol"/>
    <property type="evidence" value="ECO:0007669"/>
    <property type="project" value="TreeGrafter"/>
</dbReference>
<dbReference type="GO" id="GO:0008834">
    <property type="term" value="F:ditrans,polycis-undecaprenyl-diphosphate synthase [(2E,6E)-farnesyl-diphosphate specific] activity"/>
    <property type="evidence" value="ECO:0007669"/>
    <property type="project" value="TreeGrafter"/>
</dbReference>
<dbReference type="GO" id="GO:0000287">
    <property type="term" value="F:magnesium ion binding"/>
    <property type="evidence" value="ECO:0007669"/>
    <property type="project" value="UniProtKB-UniRule"/>
</dbReference>
<dbReference type="GO" id="GO:0030145">
    <property type="term" value="F:manganese ion binding"/>
    <property type="evidence" value="ECO:0007669"/>
    <property type="project" value="TreeGrafter"/>
</dbReference>
<dbReference type="GO" id="GO:0016094">
    <property type="term" value="P:polyprenol biosynthetic process"/>
    <property type="evidence" value="ECO:0007669"/>
    <property type="project" value="TreeGrafter"/>
</dbReference>
<dbReference type="CDD" id="cd00475">
    <property type="entry name" value="Cis_IPPS"/>
    <property type="match status" value="1"/>
</dbReference>
<dbReference type="FunFam" id="3.40.1180.10:FF:000001">
    <property type="entry name" value="(2E,6E)-farnesyl-diphosphate-specific ditrans,polycis-undecaprenyl-diphosphate synthase"/>
    <property type="match status" value="1"/>
</dbReference>
<dbReference type="Gene3D" id="3.40.1180.10">
    <property type="entry name" value="Decaprenyl diphosphate synthase-like"/>
    <property type="match status" value="1"/>
</dbReference>
<dbReference type="HAMAP" id="MF_01139">
    <property type="entry name" value="ISPT"/>
    <property type="match status" value="1"/>
</dbReference>
<dbReference type="InterPro" id="IPR001441">
    <property type="entry name" value="UPP_synth-like"/>
</dbReference>
<dbReference type="InterPro" id="IPR018520">
    <property type="entry name" value="UPP_synth-like_CS"/>
</dbReference>
<dbReference type="InterPro" id="IPR036424">
    <property type="entry name" value="UPP_synth-like_sf"/>
</dbReference>
<dbReference type="NCBIfam" id="NF011405">
    <property type="entry name" value="PRK14830.1"/>
    <property type="match status" value="1"/>
</dbReference>
<dbReference type="NCBIfam" id="TIGR00055">
    <property type="entry name" value="uppS"/>
    <property type="match status" value="1"/>
</dbReference>
<dbReference type="PANTHER" id="PTHR10291:SF0">
    <property type="entry name" value="DEHYDRODOLICHYL DIPHOSPHATE SYNTHASE 2"/>
    <property type="match status" value="1"/>
</dbReference>
<dbReference type="PANTHER" id="PTHR10291">
    <property type="entry name" value="DEHYDRODOLICHYL DIPHOSPHATE SYNTHASE FAMILY MEMBER"/>
    <property type="match status" value="1"/>
</dbReference>
<dbReference type="Pfam" id="PF01255">
    <property type="entry name" value="Prenyltransf"/>
    <property type="match status" value="1"/>
</dbReference>
<dbReference type="SUPFAM" id="SSF64005">
    <property type="entry name" value="Undecaprenyl diphosphate synthase"/>
    <property type="match status" value="1"/>
</dbReference>
<dbReference type="PROSITE" id="PS01066">
    <property type="entry name" value="UPP_SYNTHASE"/>
    <property type="match status" value="1"/>
</dbReference>
<reference key="1">
    <citation type="journal article" date="2001" name="Science">
        <title>Comparative genomics of Listeria species.</title>
        <authorList>
            <person name="Glaser P."/>
            <person name="Frangeul L."/>
            <person name="Buchrieser C."/>
            <person name="Rusniok C."/>
            <person name="Amend A."/>
            <person name="Baquero F."/>
            <person name="Berche P."/>
            <person name="Bloecker H."/>
            <person name="Brandt P."/>
            <person name="Chakraborty T."/>
            <person name="Charbit A."/>
            <person name="Chetouani F."/>
            <person name="Couve E."/>
            <person name="de Daruvar A."/>
            <person name="Dehoux P."/>
            <person name="Domann E."/>
            <person name="Dominguez-Bernal G."/>
            <person name="Duchaud E."/>
            <person name="Durant L."/>
            <person name="Dussurget O."/>
            <person name="Entian K.-D."/>
            <person name="Fsihi H."/>
            <person name="Garcia-del Portillo F."/>
            <person name="Garrido P."/>
            <person name="Gautier L."/>
            <person name="Goebel W."/>
            <person name="Gomez-Lopez N."/>
            <person name="Hain T."/>
            <person name="Hauf J."/>
            <person name="Jackson D."/>
            <person name="Jones L.-M."/>
            <person name="Kaerst U."/>
            <person name="Kreft J."/>
            <person name="Kuhn M."/>
            <person name="Kunst F."/>
            <person name="Kurapkat G."/>
            <person name="Madueno E."/>
            <person name="Maitournam A."/>
            <person name="Mata Vicente J."/>
            <person name="Ng E."/>
            <person name="Nedjari H."/>
            <person name="Nordsiek G."/>
            <person name="Novella S."/>
            <person name="de Pablos B."/>
            <person name="Perez-Diaz J.-C."/>
            <person name="Purcell R."/>
            <person name="Remmel B."/>
            <person name="Rose M."/>
            <person name="Schlueter T."/>
            <person name="Simoes N."/>
            <person name="Tierrez A."/>
            <person name="Vazquez-Boland J.-A."/>
            <person name="Voss H."/>
            <person name="Wehland J."/>
            <person name="Cossart P."/>
        </authorList>
    </citation>
    <scope>NUCLEOTIDE SEQUENCE [LARGE SCALE GENOMIC DNA]</scope>
    <source>
        <strain>ATCC BAA-680 / CLIP 11262</strain>
    </source>
</reference>
<comment type="function">
    <text evidence="1">Catalyzes the condensation of isopentenyl diphosphate (IPP) with allylic pyrophosphates generating different type of terpenoids.</text>
</comment>
<comment type="cofactor">
    <cofactor evidence="1">
        <name>Mg(2+)</name>
        <dbReference type="ChEBI" id="CHEBI:18420"/>
    </cofactor>
    <text evidence="1">Binds 2 magnesium ions per subunit.</text>
</comment>
<comment type="subunit">
    <text evidence="1">Homodimer.</text>
</comment>
<comment type="similarity">
    <text evidence="1">Belongs to the UPP synthase family.</text>
</comment>
<accession>Q92C39</accession>
<feature type="chain" id="PRO_0000123634" description="Isoprenyl transferase">
    <location>
        <begin position="1"/>
        <end position="252"/>
    </location>
</feature>
<feature type="active site" evidence="1">
    <location>
        <position position="32"/>
    </location>
</feature>
<feature type="active site" description="Proton acceptor" evidence="1">
    <location>
        <position position="80"/>
    </location>
</feature>
<feature type="binding site" evidence="1">
    <location>
        <position position="32"/>
    </location>
    <ligand>
        <name>Mg(2+)</name>
        <dbReference type="ChEBI" id="CHEBI:18420"/>
    </ligand>
</feature>
<feature type="binding site" evidence="1">
    <location>
        <begin position="33"/>
        <end position="36"/>
    </location>
    <ligand>
        <name>substrate</name>
    </ligand>
</feature>
<feature type="binding site" evidence="1">
    <location>
        <position position="37"/>
    </location>
    <ligand>
        <name>substrate</name>
    </ligand>
</feature>
<feature type="binding site" evidence="1">
    <location>
        <position position="45"/>
    </location>
    <ligand>
        <name>substrate</name>
    </ligand>
</feature>
<feature type="binding site" evidence="1">
    <location>
        <position position="49"/>
    </location>
    <ligand>
        <name>substrate</name>
    </ligand>
</feature>
<feature type="binding site" evidence="1">
    <location>
        <begin position="77"/>
        <end position="79"/>
    </location>
    <ligand>
        <name>substrate</name>
    </ligand>
</feature>
<feature type="binding site" evidence="1">
    <location>
        <position position="81"/>
    </location>
    <ligand>
        <name>substrate</name>
    </ligand>
</feature>
<feature type="binding site" evidence="1">
    <location>
        <position position="83"/>
    </location>
    <ligand>
        <name>substrate</name>
    </ligand>
</feature>
<feature type="binding site" evidence="1">
    <location>
        <position position="200"/>
    </location>
    <ligand>
        <name>substrate</name>
    </ligand>
</feature>
<feature type="binding site" evidence="1">
    <location>
        <begin position="206"/>
        <end position="208"/>
    </location>
    <ligand>
        <name>substrate</name>
    </ligand>
</feature>
<feature type="binding site" evidence="1">
    <location>
        <position position="219"/>
    </location>
    <ligand>
        <name>Mg(2+)</name>
        <dbReference type="ChEBI" id="CHEBI:18420"/>
    </ligand>
</feature>